<organism>
    <name type="scientific">Picosynechococcus sp. (strain ATCC 27264 / PCC 7002 / PR-6)</name>
    <name type="common">Agmenellum quadruplicatum</name>
    <dbReference type="NCBI Taxonomy" id="32049"/>
    <lineage>
        <taxon>Bacteria</taxon>
        <taxon>Bacillati</taxon>
        <taxon>Cyanobacteriota</taxon>
        <taxon>Cyanophyceae</taxon>
        <taxon>Oscillatoriophycideae</taxon>
        <taxon>Chroococcales</taxon>
        <taxon>Geminocystaceae</taxon>
        <taxon>Picosynechococcus</taxon>
    </lineage>
</organism>
<keyword id="KW-0004">4Fe-4S</keyword>
<keyword id="KW-0067">ATP-binding</keyword>
<keyword id="KW-0149">Chlorophyll biosynthesis</keyword>
<keyword id="KW-0408">Iron</keyword>
<keyword id="KW-0411">Iron-sulfur</keyword>
<keyword id="KW-0460">Magnesium</keyword>
<keyword id="KW-0479">Metal-binding</keyword>
<keyword id="KW-0547">Nucleotide-binding</keyword>
<keyword id="KW-0560">Oxidoreductase</keyword>
<keyword id="KW-0602">Photosynthesis</keyword>
<keyword id="KW-1185">Reference proteome</keyword>
<reference key="1">
    <citation type="submission" date="2008-02" db="EMBL/GenBank/DDBJ databases">
        <title>Complete sequence of Synechococcus sp. PCC 7002.</title>
        <authorList>
            <person name="Li T."/>
            <person name="Zhao J."/>
            <person name="Zhao C."/>
            <person name="Liu Z."/>
            <person name="Zhao F."/>
            <person name="Marquardt J."/>
            <person name="Nomura C.T."/>
            <person name="Persson S."/>
            <person name="Detter J.C."/>
            <person name="Richardson P.M."/>
            <person name="Lanz C."/>
            <person name="Schuster S.C."/>
            <person name="Wang J."/>
            <person name="Li S."/>
            <person name="Huang X."/>
            <person name="Cai T."/>
            <person name="Yu Z."/>
            <person name="Luo J."/>
            <person name="Zhao J."/>
            <person name="Bryant D.A."/>
        </authorList>
    </citation>
    <scope>NUCLEOTIDE SEQUENCE [LARGE SCALE GENOMIC DNA]</scope>
    <source>
        <strain>ATCC 27264 / PCC 7002 / PR-6</strain>
    </source>
</reference>
<reference key="2">
    <citation type="journal article" date="1993" name="Plant Syst. Evol.">
        <title>The chlL (frxC) gene: phylogenetic distribution in vascular plants and DNA sequence from Polystichum acrostichoides (Pteridophyta) and Synechococcus sp. 7002 (Cyanobacteria).</title>
        <authorList>
            <person name="Burke D.H."/>
            <person name="Raubeson L.A."/>
            <person name="Alberti M."/>
            <person name="Hearst J.E."/>
            <person name="Jordan E.T."/>
            <person name="Kirch S.A."/>
            <person name="Valinski A.E.C."/>
            <person name="Conant D.S."/>
            <person name="Stein D.B."/>
        </authorList>
        <dbReference type="AGRICOLA" id="IND20364704"/>
    </citation>
    <scope>NUCLEOTIDE SEQUENCE [GENOMIC DNA] OF 16-127</scope>
</reference>
<sequence>MTMTLAVYGKGGIGKSTTSCNISVALAKRGKKVLQIGCDPKHDSTFTLTGFLIPTIIDTLQEKDFHYEDIWPEDVIYKGYGGVDCVEAGGPPAGAGCGGYVVGETVKLLKELNAFDEYDVILFDVLGDVVCGGFAAPLNYADYCLIVTDNGFDALFAANRIAASVREKARTHPLRLAGLIGNRTSKRDLIEKYVSHVPMPVLEVLPLIEDIRVSRVKGKTLFEMAEGDSMLDYVCDFYLNIADQVLAAPEGVVPSEASDRELFSLLSDYYLNPPVEKTQEDELDLMMV</sequence>
<proteinExistence type="inferred from homology"/>
<protein>
    <recommendedName>
        <fullName evidence="1">Light-independent protochlorophyllide reductase iron-sulfur ATP-binding protein</fullName>
        <shortName evidence="1">DPOR subunit L</shortName>
        <shortName evidence="1">LI-POR subunit L</shortName>
        <ecNumber evidence="1">1.3.7.7</ecNumber>
    </recommendedName>
</protein>
<comment type="function">
    <text evidence="1">Component of the dark-operative protochlorophyllide reductase (DPOR) that uses Mg-ATP and reduced ferredoxin to reduce ring D of protochlorophyllide (Pchlide) to form chlorophyllide a (Chlide). This reaction is light-independent. The L component serves as a unique electron donor to the NB-component of the complex, and binds Mg-ATP.</text>
</comment>
<comment type="catalytic activity">
    <reaction evidence="1">
        <text>chlorophyllide a + oxidized 2[4Fe-4S]-[ferredoxin] + 2 ADP + 2 phosphate = protochlorophyllide a + reduced 2[4Fe-4S]-[ferredoxin] + 2 ATP + 2 H2O</text>
        <dbReference type="Rhea" id="RHEA:28202"/>
        <dbReference type="Rhea" id="RHEA-COMP:10002"/>
        <dbReference type="Rhea" id="RHEA-COMP:10004"/>
        <dbReference type="ChEBI" id="CHEBI:15377"/>
        <dbReference type="ChEBI" id="CHEBI:30616"/>
        <dbReference type="ChEBI" id="CHEBI:33722"/>
        <dbReference type="ChEBI" id="CHEBI:33723"/>
        <dbReference type="ChEBI" id="CHEBI:43474"/>
        <dbReference type="ChEBI" id="CHEBI:83348"/>
        <dbReference type="ChEBI" id="CHEBI:83350"/>
        <dbReference type="ChEBI" id="CHEBI:456216"/>
        <dbReference type="EC" id="1.3.7.7"/>
    </reaction>
</comment>
<comment type="cofactor">
    <cofactor evidence="1">
        <name>[4Fe-4S] cluster</name>
        <dbReference type="ChEBI" id="CHEBI:49883"/>
    </cofactor>
    <text evidence="1">Binds 1 [4Fe-4S] cluster per dimer.</text>
</comment>
<comment type="pathway">
    <text evidence="1">Porphyrin-containing compound metabolism; chlorophyll biosynthesis (light-independent).</text>
</comment>
<comment type="subunit">
    <text evidence="1">Homodimer. Protochlorophyllide reductase is composed of three subunits; ChlL, ChlN and ChlB.</text>
</comment>
<comment type="similarity">
    <text evidence="1">Belongs to the NifH/BchL/ChlL family.</text>
</comment>
<name>CHLL_PICP2</name>
<accession>Q53450</accession>
<accession>B1XJN9</accession>
<dbReference type="EC" id="1.3.7.7" evidence="1"/>
<dbReference type="EMBL" id="CP000951">
    <property type="protein sequence ID" value="ACB00325.1"/>
    <property type="molecule type" value="Genomic_DNA"/>
</dbReference>
<dbReference type="EMBL" id="U00733">
    <property type="protein sequence ID" value="AAA67137.1"/>
    <property type="molecule type" value="Genomic_DNA"/>
</dbReference>
<dbReference type="SMR" id="Q53450"/>
<dbReference type="STRING" id="32049.SYNPCC7002_A2347"/>
<dbReference type="KEGG" id="syp:SYNPCC7002_A2347"/>
<dbReference type="eggNOG" id="COG1348">
    <property type="taxonomic scope" value="Bacteria"/>
</dbReference>
<dbReference type="HOGENOM" id="CLU_059373_2_0_3"/>
<dbReference type="UniPathway" id="UPA00670"/>
<dbReference type="Proteomes" id="UP000001688">
    <property type="component" value="Chromosome"/>
</dbReference>
<dbReference type="GO" id="GO:0051539">
    <property type="term" value="F:4 iron, 4 sulfur cluster binding"/>
    <property type="evidence" value="ECO:0007669"/>
    <property type="project" value="UniProtKB-UniRule"/>
</dbReference>
<dbReference type="GO" id="GO:0005524">
    <property type="term" value="F:ATP binding"/>
    <property type="evidence" value="ECO:0007669"/>
    <property type="project" value="UniProtKB-UniRule"/>
</dbReference>
<dbReference type="GO" id="GO:0046872">
    <property type="term" value="F:metal ion binding"/>
    <property type="evidence" value="ECO:0007669"/>
    <property type="project" value="UniProtKB-KW"/>
</dbReference>
<dbReference type="GO" id="GO:0016730">
    <property type="term" value="F:oxidoreductase activity, acting on iron-sulfur proteins as donors"/>
    <property type="evidence" value="ECO:0007669"/>
    <property type="project" value="InterPro"/>
</dbReference>
<dbReference type="GO" id="GO:0016636">
    <property type="term" value="F:oxidoreductase activity, acting on the CH-CH group of donors, iron-sulfur protein as acceptor"/>
    <property type="evidence" value="ECO:0007669"/>
    <property type="project" value="UniProtKB-UniRule"/>
</dbReference>
<dbReference type="GO" id="GO:0036068">
    <property type="term" value="P:light-independent chlorophyll biosynthetic process"/>
    <property type="evidence" value="ECO:0007669"/>
    <property type="project" value="UniProtKB-UniRule"/>
</dbReference>
<dbReference type="GO" id="GO:0019685">
    <property type="term" value="P:photosynthesis, dark reaction"/>
    <property type="evidence" value="ECO:0007669"/>
    <property type="project" value="InterPro"/>
</dbReference>
<dbReference type="CDD" id="cd02032">
    <property type="entry name" value="Bchl-like"/>
    <property type="match status" value="1"/>
</dbReference>
<dbReference type="Gene3D" id="3.40.50.300">
    <property type="entry name" value="P-loop containing nucleotide triphosphate hydrolases"/>
    <property type="match status" value="1"/>
</dbReference>
<dbReference type="HAMAP" id="MF_00355">
    <property type="entry name" value="ChlL_BchL"/>
    <property type="match status" value="1"/>
</dbReference>
<dbReference type="InterPro" id="IPR030655">
    <property type="entry name" value="NifH/chlL_CS"/>
</dbReference>
<dbReference type="InterPro" id="IPR000392">
    <property type="entry name" value="NifH/frxC"/>
</dbReference>
<dbReference type="InterPro" id="IPR027417">
    <property type="entry name" value="P-loop_NTPase"/>
</dbReference>
<dbReference type="InterPro" id="IPR005971">
    <property type="entry name" value="Protochlorophyllide_ATP-bd"/>
</dbReference>
<dbReference type="NCBIfam" id="TIGR01281">
    <property type="entry name" value="DPOR_bchL"/>
    <property type="match status" value="1"/>
</dbReference>
<dbReference type="PANTHER" id="PTHR42864">
    <property type="entry name" value="LIGHT-INDEPENDENT PROTOCHLOROPHYLLIDE REDUCTASE IRON-SULFUR ATP-BINDING PROTEIN"/>
    <property type="match status" value="1"/>
</dbReference>
<dbReference type="PANTHER" id="PTHR42864:SF2">
    <property type="entry name" value="LIGHT-INDEPENDENT PROTOCHLOROPHYLLIDE REDUCTASE IRON-SULFUR ATP-BINDING PROTEIN"/>
    <property type="match status" value="1"/>
</dbReference>
<dbReference type="Pfam" id="PF00142">
    <property type="entry name" value="Fer4_NifH"/>
    <property type="match status" value="1"/>
</dbReference>
<dbReference type="PIRSF" id="PIRSF000363">
    <property type="entry name" value="Nitrogenase_iron"/>
    <property type="match status" value="1"/>
</dbReference>
<dbReference type="PRINTS" id="PR00091">
    <property type="entry name" value="NITROGNASEII"/>
</dbReference>
<dbReference type="SUPFAM" id="SSF52540">
    <property type="entry name" value="P-loop containing nucleoside triphosphate hydrolases"/>
    <property type="match status" value="1"/>
</dbReference>
<dbReference type="PROSITE" id="PS00746">
    <property type="entry name" value="NIFH_FRXC_1"/>
    <property type="match status" value="1"/>
</dbReference>
<dbReference type="PROSITE" id="PS00692">
    <property type="entry name" value="NIFH_FRXC_2"/>
    <property type="match status" value="1"/>
</dbReference>
<dbReference type="PROSITE" id="PS51026">
    <property type="entry name" value="NIFH_FRXC_3"/>
    <property type="match status" value="1"/>
</dbReference>
<evidence type="ECO:0000255" key="1">
    <source>
        <dbReference type="HAMAP-Rule" id="MF_00355"/>
    </source>
</evidence>
<feature type="chain" id="PRO_0000139572" description="Light-independent protochlorophyllide reductase iron-sulfur ATP-binding protein">
    <location>
        <begin position="1"/>
        <end position="288"/>
    </location>
</feature>
<feature type="binding site" evidence="1">
    <location>
        <begin position="12"/>
        <end position="17"/>
    </location>
    <ligand>
        <name>ATP</name>
        <dbReference type="ChEBI" id="CHEBI:30616"/>
    </ligand>
</feature>
<feature type="binding site" evidence="1">
    <location>
        <position position="16"/>
    </location>
    <ligand>
        <name>Mg(2+)</name>
        <dbReference type="ChEBI" id="CHEBI:18420"/>
    </ligand>
</feature>
<feature type="binding site" evidence="1">
    <location>
        <position position="41"/>
    </location>
    <ligand>
        <name>ATP</name>
        <dbReference type="ChEBI" id="CHEBI:30616"/>
    </ligand>
</feature>
<feature type="binding site" evidence="1">
    <location>
        <position position="97"/>
    </location>
    <ligand>
        <name>[4Fe-4S] cluster</name>
        <dbReference type="ChEBI" id="CHEBI:49883"/>
        <note>ligand shared between dimeric partners</note>
    </ligand>
</feature>
<feature type="binding site" evidence="1">
    <location>
        <position position="131"/>
    </location>
    <ligand>
        <name>[4Fe-4S] cluster</name>
        <dbReference type="ChEBI" id="CHEBI:49883"/>
        <note>ligand shared between dimeric partners</note>
    </ligand>
</feature>
<feature type="binding site" evidence="1">
    <location>
        <begin position="182"/>
        <end position="183"/>
    </location>
    <ligand>
        <name>ATP</name>
        <dbReference type="ChEBI" id="CHEBI:30616"/>
    </ligand>
</feature>
<gene>
    <name evidence="1" type="primary">chlL</name>
    <name type="synonym">frxC</name>
    <name type="ordered locus">SYNPCC7002_A2347</name>
</gene>